<name>GLMM_BIFLD</name>
<accession>B3DTC2</accession>
<feature type="chain" id="PRO_1000201064" description="Phosphoglucosamine mutase">
    <location>
        <begin position="1"/>
        <end position="461"/>
    </location>
</feature>
<feature type="active site" description="Phosphoserine intermediate" evidence="1">
    <location>
        <position position="107"/>
    </location>
</feature>
<feature type="binding site" description="via phosphate group" evidence="1">
    <location>
        <position position="107"/>
    </location>
    <ligand>
        <name>Mg(2+)</name>
        <dbReference type="ChEBI" id="CHEBI:18420"/>
    </ligand>
</feature>
<feature type="binding site" evidence="1">
    <location>
        <position position="254"/>
    </location>
    <ligand>
        <name>Mg(2+)</name>
        <dbReference type="ChEBI" id="CHEBI:18420"/>
    </ligand>
</feature>
<feature type="binding site" evidence="1">
    <location>
        <position position="256"/>
    </location>
    <ligand>
        <name>Mg(2+)</name>
        <dbReference type="ChEBI" id="CHEBI:18420"/>
    </ligand>
</feature>
<feature type="binding site" evidence="1">
    <location>
        <position position="258"/>
    </location>
    <ligand>
        <name>Mg(2+)</name>
        <dbReference type="ChEBI" id="CHEBI:18420"/>
    </ligand>
</feature>
<feature type="modified residue" description="Phosphoserine" evidence="1">
    <location>
        <position position="107"/>
    </location>
</feature>
<sequence>MPKMFGTDGVRGLANRDLTARLALDLGDAAVRVLGDAGTQDDQPEGRRRALVGRDTRVSGDFLASALSAGMAAGGFDVIDAGIIPTPGIAFLTSVLNVEMGAVISASHNPMPDNGIKFFARGGFKLPDQKEDDIEAVLGQDWDRPTGAGVGRVSHDQTTATNLYIDHLVATIAPLNDDKTQPKPLKGLKIVADCANGATSVVAPEALRRAGADVIVINASPDGYNINKNAGSTHPEQLQAMVKATDAVMGVAFDGDADRCLAVDEDGNMINGDQIMGILARAKQREGKLNHDTLVVTVMSNLGLKLALKDMGIKTVETAVGDRYVLEEMLKGDYSLGGEQSGHVINREFATTGDGTLTALTLCNEVVKSGKSLKELAADFPQLPQTLINVPNVDKKAASTNKRIQDAVAREEELLGDTGRVLLRPSGTEPLVRVMAEAATQAYADEVCTRLAKIVAEELAL</sequence>
<evidence type="ECO:0000255" key="1">
    <source>
        <dbReference type="HAMAP-Rule" id="MF_01554"/>
    </source>
</evidence>
<comment type="function">
    <text evidence="1">Catalyzes the conversion of glucosamine-6-phosphate to glucosamine-1-phosphate.</text>
</comment>
<comment type="catalytic activity">
    <reaction evidence="1">
        <text>alpha-D-glucosamine 1-phosphate = D-glucosamine 6-phosphate</text>
        <dbReference type="Rhea" id="RHEA:23424"/>
        <dbReference type="ChEBI" id="CHEBI:58516"/>
        <dbReference type="ChEBI" id="CHEBI:58725"/>
        <dbReference type="EC" id="5.4.2.10"/>
    </reaction>
</comment>
<comment type="cofactor">
    <cofactor evidence="1">
        <name>Mg(2+)</name>
        <dbReference type="ChEBI" id="CHEBI:18420"/>
    </cofactor>
    <text evidence="1">Binds 1 Mg(2+) ion per subunit.</text>
</comment>
<comment type="PTM">
    <text evidence="1">Activated by phosphorylation.</text>
</comment>
<comment type="similarity">
    <text evidence="1">Belongs to the phosphohexose mutase family.</text>
</comment>
<reference key="1">
    <citation type="journal article" date="2008" name="BMC Genomics">
        <title>Comparative genomic analysis of the gut bacterium Bifidobacterium longum reveals loci susceptible to deletion during pure culture growth.</title>
        <authorList>
            <person name="Lee J.H."/>
            <person name="Karamychev V.N."/>
            <person name="Kozyavkin S.A."/>
            <person name="Mills D."/>
            <person name="Pavlov A.R."/>
            <person name="Pavlova N.V."/>
            <person name="Polouchine N.N."/>
            <person name="Richardson P.M."/>
            <person name="Shakhova V.V."/>
            <person name="Slesarev A.I."/>
            <person name="Weimer B."/>
            <person name="O'Sullivan D.J."/>
        </authorList>
    </citation>
    <scope>NUCLEOTIDE SEQUENCE [LARGE SCALE GENOMIC DNA]</scope>
    <source>
        <strain>DJO10A</strain>
    </source>
</reference>
<gene>
    <name evidence="1" type="primary">glmM</name>
    <name type="ordered locus">BLD_0945</name>
</gene>
<dbReference type="EC" id="5.4.2.10" evidence="1"/>
<dbReference type="EMBL" id="CP000605">
    <property type="protein sequence ID" value="ACD98391.1"/>
    <property type="molecule type" value="Genomic_DNA"/>
</dbReference>
<dbReference type="RefSeq" id="WP_007051299.1">
    <property type="nucleotide sequence ID" value="NZ_AABM02000002.1"/>
</dbReference>
<dbReference type="SMR" id="B3DTC2"/>
<dbReference type="GeneID" id="69577665"/>
<dbReference type="KEGG" id="blj:BLD_0945"/>
<dbReference type="HOGENOM" id="CLU_016950_7_0_11"/>
<dbReference type="Proteomes" id="UP000002419">
    <property type="component" value="Chromosome"/>
</dbReference>
<dbReference type="GO" id="GO:0005829">
    <property type="term" value="C:cytosol"/>
    <property type="evidence" value="ECO:0007669"/>
    <property type="project" value="TreeGrafter"/>
</dbReference>
<dbReference type="GO" id="GO:0000287">
    <property type="term" value="F:magnesium ion binding"/>
    <property type="evidence" value="ECO:0007669"/>
    <property type="project" value="UniProtKB-UniRule"/>
</dbReference>
<dbReference type="GO" id="GO:0008966">
    <property type="term" value="F:phosphoglucosamine mutase activity"/>
    <property type="evidence" value="ECO:0007669"/>
    <property type="project" value="UniProtKB-UniRule"/>
</dbReference>
<dbReference type="GO" id="GO:0004615">
    <property type="term" value="F:phosphomannomutase activity"/>
    <property type="evidence" value="ECO:0007669"/>
    <property type="project" value="TreeGrafter"/>
</dbReference>
<dbReference type="GO" id="GO:0005975">
    <property type="term" value="P:carbohydrate metabolic process"/>
    <property type="evidence" value="ECO:0007669"/>
    <property type="project" value="InterPro"/>
</dbReference>
<dbReference type="GO" id="GO:0009252">
    <property type="term" value="P:peptidoglycan biosynthetic process"/>
    <property type="evidence" value="ECO:0007669"/>
    <property type="project" value="TreeGrafter"/>
</dbReference>
<dbReference type="GO" id="GO:0006048">
    <property type="term" value="P:UDP-N-acetylglucosamine biosynthetic process"/>
    <property type="evidence" value="ECO:0007669"/>
    <property type="project" value="TreeGrafter"/>
</dbReference>
<dbReference type="CDD" id="cd05802">
    <property type="entry name" value="GlmM"/>
    <property type="match status" value="1"/>
</dbReference>
<dbReference type="FunFam" id="3.30.310.50:FF:000001">
    <property type="entry name" value="Phosphoglucosamine mutase"/>
    <property type="match status" value="1"/>
</dbReference>
<dbReference type="FunFam" id="3.40.120.10:FF:000001">
    <property type="entry name" value="Phosphoglucosamine mutase"/>
    <property type="match status" value="1"/>
</dbReference>
<dbReference type="FunFam" id="3.40.120.10:FF:000002">
    <property type="entry name" value="Phosphoglucosamine mutase"/>
    <property type="match status" value="1"/>
</dbReference>
<dbReference type="Gene3D" id="3.40.120.10">
    <property type="entry name" value="Alpha-D-Glucose-1,6-Bisphosphate, subunit A, domain 3"/>
    <property type="match status" value="3"/>
</dbReference>
<dbReference type="Gene3D" id="3.30.310.50">
    <property type="entry name" value="Alpha-D-phosphohexomutase, C-terminal domain"/>
    <property type="match status" value="1"/>
</dbReference>
<dbReference type="HAMAP" id="MF_01554_B">
    <property type="entry name" value="GlmM_B"/>
    <property type="match status" value="1"/>
</dbReference>
<dbReference type="InterPro" id="IPR005844">
    <property type="entry name" value="A-D-PHexomutase_a/b/a-I"/>
</dbReference>
<dbReference type="InterPro" id="IPR016055">
    <property type="entry name" value="A-D-PHexomutase_a/b/a-I/II/III"/>
</dbReference>
<dbReference type="InterPro" id="IPR005845">
    <property type="entry name" value="A-D-PHexomutase_a/b/a-II"/>
</dbReference>
<dbReference type="InterPro" id="IPR005846">
    <property type="entry name" value="A-D-PHexomutase_a/b/a-III"/>
</dbReference>
<dbReference type="InterPro" id="IPR005843">
    <property type="entry name" value="A-D-PHexomutase_C"/>
</dbReference>
<dbReference type="InterPro" id="IPR036900">
    <property type="entry name" value="A-D-PHexomutase_C_sf"/>
</dbReference>
<dbReference type="InterPro" id="IPR005841">
    <property type="entry name" value="Alpha-D-phosphohexomutase_SF"/>
</dbReference>
<dbReference type="InterPro" id="IPR006352">
    <property type="entry name" value="GlmM_bact"/>
</dbReference>
<dbReference type="InterPro" id="IPR050060">
    <property type="entry name" value="Phosphoglucosamine_mutase"/>
</dbReference>
<dbReference type="NCBIfam" id="TIGR01455">
    <property type="entry name" value="glmM"/>
    <property type="match status" value="1"/>
</dbReference>
<dbReference type="PANTHER" id="PTHR42946:SF1">
    <property type="entry name" value="PHOSPHOGLUCOMUTASE (ALPHA-D-GLUCOSE-1,6-BISPHOSPHATE-DEPENDENT)"/>
    <property type="match status" value="1"/>
</dbReference>
<dbReference type="PANTHER" id="PTHR42946">
    <property type="entry name" value="PHOSPHOHEXOSE MUTASE"/>
    <property type="match status" value="1"/>
</dbReference>
<dbReference type="Pfam" id="PF02878">
    <property type="entry name" value="PGM_PMM_I"/>
    <property type="match status" value="1"/>
</dbReference>
<dbReference type="Pfam" id="PF02879">
    <property type="entry name" value="PGM_PMM_II"/>
    <property type="match status" value="1"/>
</dbReference>
<dbReference type="Pfam" id="PF02880">
    <property type="entry name" value="PGM_PMM_III"/>
    <property type="match status" value="1"/>
</dbReference>
<dbReference type="Pfam" id="PF00408">
    <property type="entry name" value="PGM_PMM_IV"/>
    <property type="match status" value="1"/>
</dbReference>
<dbReference type="PRINTS" id="PR00509">
    <property type="entry name" value="PGMPMM"/>
</dbReference>
<dbReference type="SUPFAM" id="SSF55957">
    <property type="entry name" value="Phosphoglucomutase, C-terminal domain"/>
    <property type="match status" value="1"/>
</dbReference>
<dbReference type="SUPFAM" id="SSF53738">
    <property type="entry name" value="Phosphoglucomutase, first 3 domains"/>
    <property type="match status" value="3"/>
</dbReference>
<keyword id="KW-0413">Isomerase</keyword>
<keyword id="KW-0460">Magnesium</keyword>
<keyword id="KW-0479">Metal-binding</keyword>
<keyword id="KW-0597">Phosphoprotein</keyword>
<organism>
    <name type="scientific">Bifidobacterium longum (strain DJO10A)</name>
    <dbReference type="NCBI Taxonomy" id="205913"/>
    <lineage>
        <taxon>Bacteria</taxon>
        <taxon>Bacillati</taxon>
        <taxon>Actinomycetota</taxon>
        <taxon>Actinomycetes</taxon>
        <taxon>Bifidobacteriales</taxon>
        <taxon>Bifidobacteriaceae</taxon>
        <taxon>Bifidobacterium</taxon>
    </lineage>
</organism>
<protein>
    <recommendedName>
        <fullName evidence="1">Phosphoglucosamine mutase</fullName>
        <ecNumber evidence="1">5.4.2.10</ecNumber>
    </recommendedName>
</protein>
<proteinExistence type="inferred from homology"/>